<protein>
    <recommendedName>
        <fullName>ATP-dependent RNA helicase DBP10</fullName>
        <ecNumber>3.6.4.13</ecNumber>
    </recommendedName>
</protein>
<comment type="function">
    <text evidence="1">ATP-binding RNA helicase involved in the biogenesis of 60S ribosomal subunits and is required for the normal formation of 25S and 5.8S rRNAs.</text>
</comment>
<comment type="catalytic activity">
    <reaction>
        <text>ATP + H2O = ADP + phosphate + H(+)</text>
        <dbReference type="Rhea" id="RHEA:13065"/>
        <dbReference type="ChEBI" id="CHEBI:15377"/>
        <dbReference type="ChEBI" id="CHEBI:15378"/>
        <dbReference type="ChEBI" id="CHEBI:30616"/>
        <dbReference type="ChEBI" id="CHEBI:43474"/>
        <dbReference type="ChEBI" id="CHEBI:456216"/>
        <dbReference type="EC" id="3.6.4.13"/>
    </reaction>
</comment>
<comment type="subcellular location">
    <subcellularLocation>
        <location evidence="1">Nucleus</location>
        <location evidence="1">Nucleolus</location>
    </subcellularLocation>
</comment>
<comment type="domain">
    <text>The Q motif is unique to and characteristic of the DEAD box family of RNA helicases and controls ATP binding and hydrolysis.</text>
</comment>
<comment type="similarity">
    <text evidence="5">Belongs to the DEAD box helicase family. DDX54/DBP10 subfamily.</text>
</comment>
<accession>Q6BL34</accession>
<name>DBP10_DEBHA</name>
<proteinExistence type="inferred from homology"/>
<organism>
    <name type="scientific">Debaryomyces hansenii (strain ATCC 36239 / CBS 767 / BCRC 21394 / JCM 1990 / NBRC 0083 / IGC 2968)</name>
    <name type="common">Yeast</name>
    <name type="synonym">Torulaspora hansenii</name>
    <dbReference type="NCBI Taxonomy" id="284592"/>
    <lineage>
        <taxon>Eukaryota</taxon>
        <taxon>Fungi</taxon>
        <taxon>Dikarya</taxon>
        <taxon>Ascomycota</taxon>
        <taxon>Saccharomycotina</taxon>
        <taxon>Pichiomycetes</taxon>
        <taxon>Debaryomycetaceae</taxon>
        <taxon>Debaryomyces</taxon>
    </lineage>
</organism>
<gene>
    <name type="primary">DBP10</name>
    <name type="ordered locus">DEHA2F16720g</name>
</gene>
<reference key="1">
    <citation type="journal article" date="2004" name="Nature">
        <title>Genome evolution in yeasts.</title>
        <authorList>
            <person name="Dujon B."/>
            <person name="Sherman D."/>
            <person name="Fischer G."/>
            <person name="Durrens P."/>
            <person name="Casaregola S."/>
            <person name="Lafontaine I."/>
            <person name="de Montigny J."/>
            <person name="Marck C."/>
            <person name="Neuveglise C."/>
            <person name="Talla E."/>
            <person name="Goffard N."/>
            <person name="Frangeul L."/>
            <person name="Aigle M."/>
            <person name="Anthouard V."/>
            <person name="Babour A."/>
            <person name="Barbe V."/>
            <person name="Barnay S."/>
            <person name="Blanchin S."/>
            <person name="Beckerich J.-M."/>
            <person name="Beyne E."/>
            <person name="Bleykasten C."/>
            <person name="Boisrame A."/>
            <person name="Boyer J."/>
            <person name="Cattolico L."/>
            <person name="Confanioleri F."/>
            <person name="de Daruvar A."/>
            <person name="Despons L."/>
            <person name="Fabre E."/>
            <person name="Fairhead C."/>
            <person name="Ferry-Dumazet H."/>
            <person name="Groppi A."/>
            <person name="Hantraye F."/>
            <person name="Hennequin C."/>
            <person name="Jauniaux N."/>
            <person name="Joyet P."/>
            <person name="Kachouri R."/>
            <person name="Kerrest A."/>
            <person name="Koszul R."/>
            <person name="Lemaire M."/>
            <person name="Lesur I."/>
            <person name="Ma L."/>
            <person name="Muller H."/>
            <person name="Nicaud J.-M."/>
            <person name="Nikolski M."/>
            <person name="Oztas S."/>
            <person name="Ozier-Kalogeropoulos O."/>
            <person name="Pellenz S."/>
            <person name="Potier S."/>
            <person name="Richard G.-F."/>
            <person name="Straub M.-L."/>
            <person name="Suleau A."/>
            <person name="Swennen D."/>
            <person name="Tekaia F."/>
            <person name="Wesolowski-Louvel M."/>
            <person name="Westhof E."/>
            <person name="Wirth B."/>
            <person name="Zeniou-Meyer M."/>
            <person name="Zivanovic Y."/>
            <person name="Bolotin-Fukuhara M."/>
            <person name="Thierry A."/>
            <person name="Bouchier C."/>
            <person name="Caudron B."/>
            <person name="Scarpelli C."/>
            <person name="Gaillardin C."/>
            <person name="Weissenbach J."/>
            <person name="Wincker P."/>
            <person name="Souciet J.-L."/>
        </authorList>
    </citation>
    <scope>NUCLEOTIDE SEQUENCE [LARGE SCALE GENOMIC DNA]</scope>
    <source>
        <strain>ATCC 36239 / CBS 767 / BCRC 21394 / JCM 1990 / NBRC 0083 / IGC 2968</strain>
    </source>
</reference>
<dbReference type="EC" id="3.6.4.13"/>
<dbReference type="EMBL" id="CR382138">
    <property type="protein sequence ID" value="CAG89469.2"/>
    <property type="molecule type" value="Genomic_DNA"/>
</dbReference>
<dbReference type="RefSeq" id="XP_461087.2">
    <property type="nucleotide sequence ID" value="XM_461087.1"/>
</dbReference>
<dbReference type="SMR" id="Q6BL34"/>
<dbReference type="FunCoup" id="Q6BL34">
    <property type="interactions" value="1141"/>
</dbReference>
<dbReference type="STRING" id="284592.Q6BL34"/>
<dbReference type="GeneID" id="2903098"/>
<dbReference type="KEGG" id="dha:DEHA2F16720g"/>
<dbReference type="VEuPathDB" id="FungiDB:DEHA2F16720g"/>
<dbReference type="eggNOG" id="KOG0337">
    <property type="taxonomic scope" value="Eukaryota"/>
</dbReference>
<dbReference type="HOGENOM" id="CLU_003041_5_1_1"/>
<dbReference type="InParanoid" id="Q6BL34"/>
<dbReference type="OMA" id="EDQFGMM"/>
<dbReference type="OrthoDB" id="10261375at2759"/>
<dbReference type="Proteomes" id="UP000000599">
    <property type="component" value="Chromosome F"/>
</dbReference>
<dbReference type="GO" id="GO:0005829">
    <property type="term" value="C:cytosol"/>
    <property type="evidence" value="ECO:0007669"/>
    <property type="project" value="TreeGrafter"/>
</dbReference>
<dbReference type="GO" id="GO:0005730">
    <property type="term" value="C:nucleolus"/>
    <property type="evidence" value="ECO:0007669"/>
    <property type="project" value="UniProtKB-SubCell"/>
</dbReference>
<dbReference type="GO" id="GO:0030687">
    <property type="term" value="C:preribosome, large subunit precursor"/>
    <property type="evidence" value="ECO:0007669"/>
    <property type="project" value="EnsemblFungi"/>
</dbReference>
<dbReference type="GO" id="GO:0005524">
    <property type="term" value="F:ATP binding"/>
    <property type="evidence" value="ECO:0007669"/>
    <property type="project" value="UniProtKB-KW"/>
</dbReference>
<dbReference type="GO" id="GO:0016887">
    <property type="term" value="F:ATP hydrolysis activity"/>
    <property type="evidence" value="ECO:0007669"/>
    <property type="project" value="RHEA"/>
</dbReference>
<dbReference type="GO" id="GO:0042802">
    <property type="term" value="F:identical protein binding"/>
    <property type="evidence" value="ECO:0007669"/>
    <property type="project" value="EnsemblFungi"/>
</dbReference>
<dbReference type="GO" id="GO:0003723">
    <property type="term" value="F:RNA binding"/>
    <property type="evidence" value="ECO:0007669"/>
    <property type="project" value="UniProtKB-KW"/>
</dbReference>
<dbReference type="GO" id="GO:0003724">
    <property type="term" value="F:RNA helicase activity"/>
    <property type="evidence" value="ECO:0007669"/>
    <property type="project" value="UniProtKB-EC"/>
</dbReference>
<dbReference type="GO" id="GO:1902626">
    <property type="term" value="P:assembly of large subunit precursor of preribosome"/>
    <property type="evidence" value="ECO:0007669"/>
    <property type="project" value="EnsemblFungi"/>
</dbReference>
<dbReference type="GO" id="GO:0000466">
    <property type="term" value="P:maturation of 5.8S rRNA from tricistronic rRNA transcript (SSU-rRNA, 5.8S rRNA, LSU-rRNA)"/>
    <property type="evidence" value="ECO:0007669"/>
    <property type="project" value="EnsemblFungi"/>
</dbReference>
<dbReference type="GO" id="GO:0000463">
    <property type="term" value="P:maturation of LSU-rRNA from tricistronic rRNA transcript (SSU-rRNA, 5.8S rRNA, LSU-rRNA)"/>
    <property type="evidence" value="ECO:0007669"/>
    <property type="project" value="EnsemblFungi"/>
</dbReference>
<dbReference type="CDD" id="cd17959">
    <property type="entry name" value="DEADc_DDX54"/>
    <property type="match status" value="1"/>
</dbReference>
<dbReference type="CDD" id="cd18787">
    <property type="entry name" value="SF2_C_DEAD"/>
    <property type="match status" value="1"/>
</dbReference>
<dbReference type="FunFam" id="3.40.50.300:FF:000865">
    <property type="entry name" value="ATP-dependent RNA helicase DDX54"/>
    <property type="match status" value="1"/>
</dbReference>
<dbReference type="Gene3D" id="3.40.50.300">
    <property type="entry name" value="P-loop containing nucleotide triphosphate hydrolases"/>
    <property type="match status" value="2"/>
</dbReference>
<dbReference type="InterPro" id="IPR012541">
    <property type="entry name" value="DBP10_C"/>
</dbReference>
<dbReference type="InterPro" id="IPR033517">
    <property type="entry name" value="DDX54/DBP10_DEAD-box_helicase"/>
</dbReference>
<dbReference type="InterPro" id="IPR011545">
    <property type="entry name" value="DEAD/DEAH_box_helicase_dom"/>
</dbReference>
<dbReference type="InterPro" id="IPR050079">
    <property type="entry name" value="DEAD_box_RNA_helicase"/>
</dbReference>
<dbReference type="InterPro" id="IPR014001">
    <property type="entry name" value="Helicase_ATP-bd"/>
</dbReference>
<dbReference type="InterPro" id="IPR001650">
    <property type="entry name" value="Helicase_C-like"/>
</dbReference>
<dbReference type="InterPro" id="IPR027417">
    <property type="entry name" value="P-loop_NTPase"/>
</dbReference>
<dbReference type="InterPro" id="IPR000629">
    <property type="entry name" value="RNA-helicase_DEAD-box_CS"/>
</dbReference>
<dbReference type="InterPro" id="IPR014014">
    <property type="entry name" value="RNA_helicase_DEAD_Q_motif"/>
</dbReference>
<dbReference type="PANTHER" id="PTHR47959">
    <property type="entry name" value="ATP-DEPENDENT RNA HELICASE RHLE-RELATED"/>
    <property type="match status" value="1"/>
</dbReference>
<dbReference type="PANTHER" id="PTHR47959:SF8">
    <property type="entry name" value="RNA HELICASE"/>
    <property type="match status" value="1"/>
</dbReference>
<dbReference type="Pfam" id="PF08147">
    <property type="entry name" value="DBP10CT"/>
    <property type="match status" value="1"/>
</dbReference>
<dbReference type="Pfam" id="PF00270">
    <property type="entry name" value="DEAD"/>
    <property type="match status" value="1"/>
</dbReference>
<dbReference type="Pfam" id="PF00271">
    <property type="entry name" value="Helicase_C"/>
    <property type="match status" value="1"/>
</dbReference>
<dbReference type="SMART" id="SM01123">
    <property type="entry name" value="DBP10CT"/>
    <property type="match status" value="1"/>
</dbReference>
<dbReference type="SMART" id="SM00487">
    <property type="entry name" value="DEXDc"/>
    <property type="match status" value="1"/>
</dbReference>
<dbReference type="SMART" id="SM00490">
    <property type="entry name" value="HELICc"/>
    <property type="match status" value="1"/>
</dbReference>
<dbReference type="SUPFAM" id="SSF52540">
    <property type="entry name" value="P-loop containing nucleoside triphosphate hydrolases"/>
    <property type="match status" value="2"/>
</dbReference>
<dbReference type="PROSITE" id="PS00039">
    <property type="entry name" value="DEAD_ATP_HELICASE"/>
    <property type="match status" value="1"/>
</dbReference>
<dbReference type="PROSITE" id="PS51192">
    <property type="entry name" value="HELICASE_ATP_BIND_1"/>
    <property type="match status" value="1"/>
</dbReference>
<dbReference type="PROSITE" id="PS51194">
    <property type="entry name" value="HELICASE_CTER"/>
    <property type="match status" value="1"/>
</dbReference>
<dbReference type="PROSITE" id="PS51195">
    <property type="entry name" value="Q_MOTIF"/>
    <property type="match status" value="1"/>
</dbReference>
<keyword id="KW-0067">ATP-binding</keyword>
<keyword id="KW-0347">Helicase</keyword>
<keyword id="KW-0378">Hydrolase</keyword>
<keyword id="KW-0547">Nucleotide-binding</keyword>
<keyword id="KW-0539">Nucleus</keyword>
<keyword id="KW-1185">Reference proteome</keyword>
<keyword id="KW-0690">Ribosome biogenesis</keyword>
<keyword id="KW-0694">RNA-binding</keyword>
<keyword id="KW-0698">rRNA processing</keyword>
<evidence type="ECO:0000250" key="1"/>
<evidence type="ECO:0000255" key="2">
    <source>
        <dbReference type="PROSITE-ProRule" id="PRU00541"/>
    </source>
</evidence>
<evidence type="ECO:0000255" key="3">
    <source>
        <dbReference type="PROSITE-ProRule" id="PRU00542"/>
    </source>
</evidence>
<evidence type="ECO:0000256" key="4">
    <source>
        <dbReference type="SAM" id="MobiDB-lite"/>
    </source>
</evidence>
<evidence type="ECO:0000305" key="5"/>
<sequence>MSDEEDYDIAGTLALAGSDSEPESDLNSDNEEVQDEIVSDEDDTKHKPNKKQKLEKGKSKQTFPSLELSDDEAENESKDMASYFVANNPQAKKAKNGSFPSFGFSKFLLTNISKKGFKQPTPIQRKTIPLIMENRDVVGMARTGSGKTAAFTLPLVEKLKSHSPRVGVRAIILSPSRELASQTFKQVKEFSKGTDLRSIVLIGGDSLEEQFSSMMTNPDVIVATPGRFLHLKVEMELELKTVEYIVFDEADRLFEMGFAEQLNELIAALPSSRQSLLFSATLPRSLIDFAKAGLTNPVLVRLDAETKISDQLQMAFFSIKNNEREASLLYVLQEVIKLPLASPEEVKRYSDMEKRDNGSEDEAEDENNNKKKRFKFKKERLPPANMLPSKHSTIIFVPTKHHVEYVTTLLKDAGYLVSYIYGTLDQHARKQQLYQFRIGMTSLLVVTDVAARGIDIPILANVVNYTLPGSSKIFIHRVGRTARAGNSGWAYSIVNEKELPYLLDLELFLGRKVLLTSMHEKKCEMLKTKQSSNYVEPKVSYTDRLVLGSIPRVDIETFQELYENILRNHYELSVVKGVATKGEKLYYRTRQSASQESLKRSKEILSTGNWDDQHLLFGPNLEKEKEKFLTQLLNRKSKETVFEFNKKGNDRDEDSLVEFMHKRRKQIAPIQRRAKEKRELLEKERMAGLTHGIENEILKNDGEIGYSGITIEADEEELQDAFEDADELIEKKKIEKKKSFRDPQYFLSHYAPAAVIQDQQLSLSSSFANDAAKATFDLDNDEKLNANKQVMQWDRKKGNYVNAHSTDKKFIIGESGQKIPATYRSGRFDDWKKQRNLKPTKTGAMEANATNGNDRRFKHKKVASPKLPDKFRDDYHKQKEKVKKAVDSGLKVKGYNKPGQKQELRSTEDIRKAREAKDKKKQKNARPSRKRK</sequence>
<feature type="chain" id="PRO_0000232314" description="ATP-dependent RNA helicase DBP10">
    <location>
        <begin position="1"/>
        <end position="932"/>
    </location>
</feature>
<feature type="domain" description="Helicase ATP-binding" evidence="2">
    <location>
        <begin position="128"/>
        <end position="300"/>
    </location>
</feature>
<feature type="domain" description="Helicase C-terminal" evidence="3">
    <location>
        <begin position="369"/>
        <end position="529"/>
    </location>
</feature>
<feature type="region of interest" description="Disordered" evidence="4">
    <location>
        <begin position="1"/>
        <end position="74"/>
    </location>
</feature>
<feature type="region of interest" description="Disordered" evidence="4">
    <location>
        <begin position="349"/>
        <end position="375"/>
    </location>
</feature>
<feature type="region of interest" description="Disordered" evidence="4">
    <location>
        <begin position="860"/>
        <end position="932"/>
    </location>
</feature>
<feature type="short sequence motif" description="Q motif">
    <location>
        <begin position="97"/>
        <end position="125"/>
    </location>
</feature>
<feature type="short sequence motif" description="DEAD box">
    <location>
        <begin position="248"/>
        <end position="251"/>
    </location>
</feature>
<feature type="compositionally biased region" description="Acidic residues" evidence="4">
    <location>
        <begin position="20"/>
        <end position="42"/>
    </location>
</feature>
<feature type="compositionally biased region" description="Basic and acidic residues" evidence="4">
    <location>
        <begin position="349"/>
        <end position="358"/>
    </location>
</feature>
<feature type="compositionally biased region" description="Basic and acidic residues" evidence="4">
    <location>
        <begin position="867"/>
        <end position="877"/>
    </location>
</feature>
<feature type="compositionally biased region" description="Basic and acidic residues" evidence="4">
    <location>
        <begin position="900"/>
        <end position="918"/>
    </location>
</feature>
<feature type="compositionally biased region" description="Basic residues" evidence="4">
    <location>
        <begin position="919"/>
        <end position="932"/>
    </location>
</feature>
<feature type="binding site" evidence="2">
    <location>
        <begin position="141"/>
        <end position="148"/>
    </location>
    <ligand>
        <name>ATP</name>
        <dbReference type="ChEBI" id="CHEBI:30616"/>
    </ligand>
</feature>